<protein>
    <recommendedName>
        <fullName evidence="1">UPF0391 membrane protein XAC1353</fullName>
    </recommendedName>
</protein>
<reference key="1">
    <citation type="journal article" date="2002" name="Nature">
        <title>Comparison of the genomes of two Xanthomonas pathogens with differing host specificities.</title>
        <authorList>
            <person name="da Silva A.C.R."/>
            <person name="Ferro J.A."/>
            <person name="Reinach F.C."/>
            <person name="Farah C.S."/>
            <person name="Furlan L.R."/>
            <person name="Quaggio R.B."/>
            <person name="Monteiro-Vitorello C.B."/>
            <person name="Van Sluys M.A."/>
            <person name="Almeida N.F. Jr."/>
            <person name="Alves L.M.C."/>
            <person name="do Amaral A.M."/>
            <person name="Bertolini M.C."/>
            <person name="Camargo L.E.A."/>
            <person name="Camarotte G."/>
            <person name="Cannavan F."/>
            <person name="Cardozo J."/>
            <person name="Chambergo F."/>
            <person name="Ciapina L.P."/>
            <person name="Cicarelli R.M.B."/>
            <person name="Coutinho L.L."/>
            <person name="Cursino-Santos J.R."/>
            <person name="El-Dorry H."/>
            <person name="Faria J.B."/>
            <person name="Ferreira A.J.S."/>
            <person name="Ferreira R.C.C."/>
            <person name="Ferro M.I.T."/>
            <person name="Formighieri E.F."/>
            <person name="Franco M.C."/>
            <person name="Greggio C.C."/>
            <person name="Gruber A."/>
            <person name="Katsuyama A.M."/>
            <person name="Kishi L.T."/>
            <person name="Leite R.P."/>
            <person name="Lemos E.G.M."/>
            <person name="Lemos M.V.F."/>
            <person name="Locali E.C."/>
            <person name="Machado M.A."/>
            <person name="Madeira A.M.B.N."/>
            <person name="Martinez-Rossi N.M."/>
            <person name="Martins E.C."/>
            <person name="Meidanis J."/>
            <person name="Menck C.F.M."/>
            <person name="Miyaki C.Y."/>
            <person name="Moon D.H."/>
            <person name="Moreira L.M."/>
            <person name="Novo M.T.M."/>
            <person name="Okura V.K."/>
            <person name="Oliveira M.C."/>
            <person name="Oliveira V.R."/>
            <person name="Pereira H.A."/>
            <person name="Rossi A."/>
            <person name="Sena J.A.D."/>
            <person name="Silva C."/>
            <person name="de Souza R.F."/>
            <person name="Spinola L.A.F."/>
            <person name="Takita M.A."/>
            <person name="Tamura R.E."/>
            <person name="Teixeira E.C."/>
            <person name="Tezza R.I.D."/>
            <person name="Trindade dos Santos M."/>
            <person name="Truffi D."/>
            <person name="Tsai S.M."/>
            <person name="White F.F."/>
            <person name="Setubal J.C."/>
            <person name="Kitajima J.P."/>
        </authorList>
    </citation>
    <scope>NUCLEOTIDE SEQUENCE [LARGE SCALE GENOMIC DNA]</scope>
    <source>
        <strain>306</strain>
    </source>
</reference>
<evidence type="ECO:0000255" key="1">
    <source>
        <dbReference type="HAMAP-Rule" id="MF_01361"/>
    </source>
</evidence>
<dbReference type="EMBL" id="AE008923">
    <property type="protein sequence ID" value="AAM36224.1"/>
    <property type="molecule type" value="Genomic_DNA"/>
</dbReference>
<dbReference type="RefSeq" id="WP_003489471.1">
    <property type="nucleotide sequence ID" value="NC_003919.1"/>
</dbReference>
<dbReference type="KEGG" id="xac:XAC1353"/>
<dbReference type="eggNOG" id="COG5487">
    <property type="taxonomic scope" value="Bacteria"/>
</dbReference>
<dbReference type="HOGENOM" id="CLU_187346_1_1_6"/>
<dbReference type="Proteomes" id="UP000000576">
    <property type="component" value="Chromosome"/>
</dbReference>
<dbReference type="GO" id="GO:0005886">
    <property type="term" value="C:plasma membrane"/>
    <property type="evidence" value="ECO:0007669"/>
    <property type="project" value="UniProtKB-SubCell"/>
</dbReference>
<dbReference type="HAMAP" id="MF_01361">
    <property type="entry name" value="UPF0391"/>
    <property type="match status" value="1"/>
</dbReference>
<dbReference type="InterPro" id="IPR009760">
    <property type="entry name" value="DUF1328"/>
</dbReference>
<dbReference type="NCBIfam" id="NF010231">
    <property type="entry name" value="PRK13682.2-1"/>
    <property type="match status" value="1"/>
</dbReference>
<dbReference type="Pfam" id="PF07043">
    <property type="entry name" value="DUF1328"/>
    <property type="match status" value="1"/>
</dbReference>
<dbReference type="PIRSF" id="PIRSF036466">
    <property type="entry name" value="UCP036466"/>
    <property type="match status" value="1"/>
</dbReference>
<sequence length="57" mass="5882">MIKWAIIFAIIGLIAGALGFGGMAGAAMGIAKFLFWAGIIIAIVLFVLGMTIAKKVT</sequence>
<comment type="subcellular location">
    <subcellularLocation>
        <location evidence="1">Cell membrane</location>
        <topology evidence="1">Multi-pass membrane protein</topology>
    </subcellularLocation>
</comment>
<comment type="similarity">
    <text evidence="1">Belongs to the UPF0391 family.</text>
</comment>
<gene>
    <name type="ordered locus">XAC1353</name>
</gene>
<organism>
    <name type="scientific">Xanthomonas axonopodis pv. citri (strain 306)</name>
    <dbReference type="NCBI Taxonomy" id="190486"/>
    <lineage>
        <taxon>Bacteria</taxon>
        <taxon>Pseudomonadati</taxon>
        <taxon>Pseudomonadota</taxon>
        <taxon>Gammaproteobacteria</taxon>
        <taxon>Lysobacterales</taxon>
        <taxon>Lysobacteraceae</taxon>
        <taxon>Xanthomonas</taxon>
    </lineage>
</organism>
<accession>Q8PMS3</accession>
<name>Y1353_XANAC</name>
<proteinExistence type="inferred from homology"/>
<keyword id="KW-1003">Cell membrane</keyword>
<keyword id="KW-0472">Membrane</keyword>
<keyword id="KW-0812">Transmembrane</keyword>
<keyword id="KW-1133">Transmembrane helix</keyword>
<feature type="chain" id="PRO_0000256797" description="UPF0391 membrane protein XAC1353">
    <location>
        <begin position="1"/>
        <end position="57"/>
    </location>
</feature>
<feature type="transmembrane region" description="Helical" evidence="1">
    <location>
        <begin position="4"/>
        <end position="24"/>
    </location>
</feature>
<feature type="transmembrane region" description="Helical" evidence="1">
    <location>
        <begin position="33"/>
        <end position="53"/>
    </location>
</feature>